<proteinExistence type="inferred from homology"/>
<feature type="signal peptide" evidence="2">
    <location>
        <begin position="1"/>
        <end position="30"/>
    </location>
</feature>
<feature type="chain" id="PRO_0000378145" description="Defensin-like protein">
    <location>
        <begin position="31"/>
        <end position="77"/>
    </location>
</feature>
<feature type="disulfide bond" evidence="1">
    <location>
        <begin position="33"/>
        <end position="77"/>
    </location>
</feature>
<feature type="disulfide bond" evidence="1">
    <location>
        <begin position="44"/>
        <end position="64"/>
    </location>
</feature>
<feature type="disulfide bond" evidence="1">
    <location>
        <begin position="50"/>
        <end position="71"/>
    </location>
</feature>
<feature type="disulfide bond" evidence="1">
    <location>
        <begin position="54"/>
        <end position="73"/>
    </location>
</feature>
<comment type="subcellular location">
    <subcellularLocation>
        <location evidence="1">Secreted</location>
    </subcellularLocation>
</comment>
<comment type="similarity">
    <text evidence="3">Belongs to the DEFL family.</text>
</comment>
<name>DEF_NELNU</name>
<protein>
    <recommendedName>
        <fullName>Defensin-like protein</fullName>
    </recommendedName>
    <alternativeName>
        <fullName>Gamma-thionin homolog</fullName>
    </alternativeName>
</protein>
<reference key="1">
    <citation type="submission" date="2007-02" db="EMBL/GenBank/DDBJ databases">
        <title>Molecular cloning and expression of defensin genes from sacred lotus embryonic axis.</title>
        <authorList>
            <person name="Qi L."/>
            <person name="Fu T.H."/>
            <person name="Long J."/>
            <person name="Ma Z.Q."/>
            <person name="Cai A.M."/>
            <person name="Huang S.Z."/>
        </authorList>
    </citation>
    <scope>NUCLEOTIDE SEQUENCE [MRNA]</scope>
</reference>
<organism>
    <name type="scientific">Nelumbo nucifera</name>
    <name type="common">Sacred lotus</name>
    <dbReference type="NCBI Taxonomy" id="4432"/>
    <lineage>
        <taxon>Eukaryota</taxon>
        <taxon>Viridiplantae</taxon>
        <taxon>Streptophyta</taxon>
        <taxon>Embryophyta</taxon>
        <taxon>Tracheophyta</taxon>
        <taxon>Spermatophyta</taxon>
        <taxon>Magnoliopsida</taxon>
        <taxon>Proteales</taxon>
        <taxon>Nelumbonaceae</taxon>
        <taxon>Nelumbo</taxon>
    </lineage>
</organism>
<keyword id="KW-0929">Antimicrobial</keyword>
<keyword id="KW-1015">Disulfide bond</keyword>
<keyword id="KW-0295">Fungicide</keyword>
<keyword id="KW-0611">Plant defense</keyword>
<keyword id="KW-1185">Reference proteome</keyword>
<keyword id="KW-0964">Secreted</keyword>
<keyword id="KW-0732">Signal</keyword>
<sequence length="77" mass="8361">MERGMRLFSSLVLVLLLVTATEMGPKVAEARTCESQSHRFKGACLSDTNCASVCQTEGFPAGDCKGARRRCFCVKPC</sequence>
<dbReference type="EMBL" id="EF421192">
    <property type="protein sequence ID" value="ABN46979.1"/>
    <property type="molecule type" value="mRNA"/>
</dbReference>
<dbReference type="RefSeq" id="NP_001412426.1">
    <property type="nucleotide sequence ID" value="NM_001425497.1"/>
</dbReference>
<dbReference type="RefSeq" id="XP_010270777.1">
    <property type="nucleotide sequence ID" value="XM_010272475.2"/>
</dbReference>
<dbReference type="SMR" id="A3FPF2"/>
<dbReference type="FunCoup" id="A3FPF2">
    <property type="interactions" value="35"/>
</dbReference>
<dbReference type="GeneID" id="104606994"/>
<dbReference type="KEGG" id="nnu:104606994"/>
<dbReference type="eggNOG" id="ENOG502S7HM">
    <property type="taxonomic scope" value="Eukaryota"/>
</dbReference>
<dbReference type="InParanoid" id="A3FPF2"/>
<dbReference type="OMA" id="RCFCVKP"/>
<dbReference type="OrthoDB" id="1063609at2759"/>
<dbReference type="Proteomes" id="UP000189703">
    <property type="component" value="Unplaced"/>
</dbReference>
<dbReference type="GO" id="GO:0005576">
    <property type="term" value="C:extracellular region"/>
    <property type="evidence" value="ECO:0007669"/>
    <property type="project" value="UniProtKB-SubCell"/>
</dbReference>
<dbReference type="GO" id="GO:0006952">
    <property type="term" value="P:defense response"/>
    <property type="evidence" value="ECO:0000318"/>
    <property type="project" value="GO_Central"/>
</dbReference>
<dbReference type="GO" id="GO:0050832">
    <property type="term" value="P:defense response to fungus"/>
    <property type="evidence" value="ECO:0007669"/>
    <property type="project" value="UniProtKB-KW"/>
</dbReference>
<dbReference type="GO" id="GO:0031640">
    <property type="term" value="P:killing of cells of another organism"/>
    <property type="evidence" value="ECO:0007669"/>
    <property type="project" value="UniProtKB-KW"/>
</dbReference>
<dbReference type="CDD" id="cd00107">
    <property type="entry name" value="Knot1"/>
    <property type="match status" value="1"/>
</dbReference>
<dbReference type="Gene3D" id="3.30.30.10">
    <property type="entry name" value="Knottin, scorpion toxin-like"/>
    <property type="match status" value="1"/>
</dbReference>
<dbReference type="InterPro" id="IPR008176">
    <property type="entry name" value="Defensin_plant"/>
</dbReference>
<dbReference type="InterPro" id="IPR003614">
    <property type="entry name" value="Scorpion_toxin-like"/>
</dbReference>
<dbReference type="InterPro" id="IPR036574">
    <property type="entry name" value="Scorpion_toxin-like_sf"/>
</dbReference>
<dbReference type="PANTHER" id="PTHR33147">
    <property type="entry name" value="DEFENSIN-LIKE PROTEIN 1"/>
    <property type="match status" value="1"/>
</dbReference>
<dbReference type="PANTHER" id="PTHR33147:SF39">
    <property type="entry name" value="DRO1 PROTEIN-RELATED"/>
    <property type="match status" value="1"/>
</dbReference>
<dbReference type="Pfam" id="PF00304">
    <property type="entry name" value="Gamma-thionin"/>
    <property type="match status" value="1"/>
</dbReference>
<dbReference type="PRINTS" id="PR00288">
    <property type="entry name" value="PUROTHIONIN"/>
</dbReference>
<dbReference type="SMART" id="SM00505">
    <property type="entry name" value="Knot1"/>
    <property type="match status" value="1"/>
</dbReference>
<dbReference type="SUPFAM" id="SSF57095">
    <property type="entry name" value="Scorpion toxin-like"/>
    <property type="match status" value="1"/>
</dbReference>
<dbReference type="PROSITE" id="PS00940">
    <property type="entry name" value="GAMMA_THIONIN"/>
    <property type="match status" value="1"/>
</dbReference>
<evidence type="ECO:0000250" key="1"/>
<evidence type="ECO:0000255" key="2"/>
<evidence type="ECO:0000305" key="3"/>
<accession>A3FPF2</accession>